<dbReference type="EMBL" id="M38651">
    <property type="protein sequence ID" value="AAA37580.1"/>
    <property type="molecule type" value="mRNA"/>
</dbReference>
<dbReference type="EMBL" id="AK036627">
    <property type="protein sequence ID" value="BAC29510.1"/>
    <property type="molecule type" value="mRNA"/>
</dbReference>
<dbReference type="EMBL" id="AK041525">
    <property type="protein sequence ID" value="BAC30973.1"/>
    <property type="molecule type" value="mRNA"/>
</dbReference>
<dbReference type="EMBL" id="AJ276597">
    <property type="protein sequence ID" value="CAB85618.1"/>
    <property type="molecule type" value="Genomic_DNA"/>
</dbReference>
<dbReference type="EMBL" id="AF128221">
    <property type="protein sequence ID" value="AAF22562.1"/>
    <property type="molecule type" value="mRNA"/>
</dbReference>
<dbReference type="EMBL" id="AF128220">
    <property type="protein sequence ID" value="AAF22561.1"/>
    <property type="molecule type" value="mRNA"/>
</dbReference>
<dbReference type="CCDS" id="CCDS56678.1"/>
<dbReference type="PIR" id="A40061">
    <property type="entry name" value="QRMSE"/>
</dbReference>
<dbReference type="RefSeq" id="NP_001289460.1">
    <property type="nucleotide sequence ID" value="NM_001302531.2"/>
</dbReference>
<dbReference type="RefSeq" id="NP_001289461.1">
    <property type="nucleotide sequence ID" value="NM_001302532.2"/>
</dbReference>
<dbReference type="RefSeq" id="NP_001415388.1">
    <property type="nucleotide sequence ID" value="NM_001428459.1"/>
</dbReference>
<dbReference type="RefSeq" id="NP_031982.1">
    <property type="nucleotide sequence ID" value="NM_007956.6"/>
</dbReference>
<dbReference type="RefSeq" id="XP_006512496.1">
    <property type="nucleotide sequence ID" value="XM_006512433.5"/>
</dbReference>
<dbReference type="RefSeq" id="XP_006512497.1">
    <property type="nucleotide sequence ID" value="XM_006512434.5"/>
</dbReference>
<dbReference type="RefSeq" id="XP_006512498.1">
    <property type="nucleotide sequence ID" value="XM_006512435.3"/>
</dbReference>
<dbReference type="RefSeq" id="XP_011241368.1">
    <property type="nucleotide sequence ID" value="XM_011243066.4"/>
</dbReference>
<dbReference type="RefSeq" id="XP_011241369.1">
    <property type="nucleotide sequence ID" value="XM_011243067.2"/>
</dbReference>
<dbReference type="RefSeq" id="XP_011241370.1">
    <property type="nucleotide sequence ID" value="XM_011243068.4"/>
</dbReference>
<dbReference type="SMR" id="P19785"/>
<dbReference type="BioGRID" id="199521">
    <property type="interactions" value="33"/>
</dbReference>
<dbReference type="CORUM" id="P19785"/>
<dbReference type="FunCoup" id="P19785">
    <property type="interactions" value="508"/>
</dbReference>
<dbReference type="IntAct" id="P19785">
    <property type="interactions" value="9"/>
</dbReference>
<dbReference type="MINT" id="P19785"/>
<dbReference type="STRING" id="10090.ENSMUSP00000101215"/>
<dbReference type="BindingDB" id="P19785"/>
<dbReference type="ChEMBL" id="CHEMBL3065"/>
<dbReference type="DrugCentral" id="P19785"/>
<dbReference type="GuidetoPHARMACOLOGY" id="620"/>
<dbReference type="GlyConnect" id="145">
    <property type="glycosylation" value="1 O-GlcNAc glycan (1 site)"/>
</dbReference>
<dbReference type="GlyCosmos" id="P19785">
    <property type="glycosylation" value="3 sites, 1 glycan"/>
</dbReference>
<dbReference type="GlyGen" id="P19785">
    <property type="glycosylation" value="4 sites, 1 O-linked glycan (3 sites)"/>
</dbReference>
<dbReference type="iPTMnet" id="P19785"/>
<dbReference type="PhosphoSitePlus" id="P19785"/>
<dbReference type="SwissPalm" id="P19785"/>
<dbReference type="PaxDb" id="10090-ENSMUSP00000070070"/>
<dbReference type="ProteomicsDB" id="275478"/>
<dbReference type="Antibodypedia" id="739">
    <property type="antibodies" value="4313 antibodies from 57 providers"/>
</dbReference>
<dbReference type="DNASU" id="13982"/>
<dbReference type="Ensembl" id="ENSMUST00000067086.14">
    <property type="protein sequence ID" value="ENSMUSP00000070070.8"/>
    <property type="gene ID" value="ENSMUSG00000019768.17"/>
</dbReference>
<dbReference type="Ensembl" id="ENSMUST00000105589.2">
    <property type="protein sequence ID" value="ENSMUSP00000101214.2"/>
    <property type="gene ID" value="ENSMUSG00000019768.17"/>
</dbReference>
<dbReference type="Ensembl" id="ENSMUST00000105590.8">
    <property type="protein sequence ID" value="ENSMUSP00000101215.2"/>
    <property type="gene ID" value="ENSMUSG00000019768.17"/>
</dbReference>
<dbReference type="GeneID" id="13982"/>
<dbReference type="KEGG" id="mmu:13982"/>
<dbReference type="UCSC" id="uc007egu.3">
    <property type="organism name" value="mouse"/>
</dbReference>
<dbReference type="AGR" id="MGI:1352467"/>
<dbReference type="CTD" id="2099"/>
<dbReference type="MGI" id="MGI:1352467">
    <property type="gene designation" value="Esr1"/>
</dbReference>
<dbReference type="VEuPathDB" id="HostDB:ENSMUSG00000019768"/>
<dbReference type="eggNOG" id="KOG3575">
    <property type="taxonomic scope" value="Eukaryota"/>
</dbReference>
<dbReference type="GeneTree" id="ENSGT00940000158133"/>
<dbReference type="HOGENOM" id="CLU_007368_11_1_1"/>
<dbReference type="InParanoid" id="P19785"/>
<dbReference type="OMA" id="QCDARDE"/>
<dbReference type="OrthoDB" id="5799427at2759"/>
<dbReference type="PhylomeDB" id="P19785"/>
<dbReference type="TreeFam" id="TF323751"/>
<dbReference type="Reactome" id="R-MMU-1251985">
    <property type="pathway name" value="Nuclear signaling by ERBB4"/>
</dbReference>
<dbReference type="Reactome" id="R-MMU-1257604">
    <property type="pathway name" value="PIP3 activates AKT signaling"/>
</dbReference>
<dbReference type="Reactome" id="R-MMU-383280">
    <property type="pathway name" value="Nuclear Receptor transcription pathway"/>
</dbReference>
<dbReference type="Reactome" id="R-MMU-4090294">
    <property type="pathway name" value="SUMOylation of intracellular receptors"/>
</dbReference>
<dbReference type="Reactome" id="R-MMU-5689896">
    <property type="pathway name" value="Ovarian tumor domain proteases"/>
</dbReference>
<dbReference type="Reactome" id="R-MMU-6811558">
    <property type="pathway name" value="PI5P, PP2A and IER3 Regulate PI3K/AKT Signaling"/>
</dbReference>
<dbReference type="Reactome" id="R-MMU-8866910">
    <property type="pathway name" value="TFAP2 (AP-2) family regulates transcription of growth factors and their receptors"/>
</dbReference>
<dbReference type="Reactome" id="R-MMU-8931987">
    <property type="pathway name" value="RUNX1 regulates estrogen receptor mediated transcription"/>
</dbReference>
<dbReference type="Reactome" id="R-MMU-8939211">
    <property type="pathway name" value="ESR-mediated signaling"/>
</dbReference>
<dbReference type="Reactome" id="R-MMU-9009391">
    <property type="pathway name" value="Extra-nuclear estrogen signaling"/>
</dbReference>
<dbReference type="Reactome" id="R-MMU-9018519">
    <property type="pathway name" value="Estrogen-dependent gene expression"/>
</dbReference>
<dbReference type="Reactome" id="R-MMU-9841251">
    <property type="pathway name" value="Mitochondrial unfolded protein response (UPRmt)"/>
</dbReference>
<dbReference type="BioGRID-ORCS" id="13982">
    <property type="hits" value="5 hits in 82 CRISPR screens"/>
</dbReference>
<dbReference type="ChiTaRS" id="Esr1">
    <property type="organism name" value="mouse"/>
</dbReference>
<dbReference type="PRO" id="PR:P19785"/>
<dbReference type="Proteomes" id="UP000000589">
    <property type="component" value="Chromosome 10"/>
</dbReference>
<dbReference type="RNAct" id="P19785">
    <property type="molecule type" value="protein"/>
</dbReference>
<dbReference type="Bgee" id="ENSMUSG00000019768">
    <property type="expression patterns" value="Expressed in gastrula and 206 other cell types or tissues"/>
</dbReference>
<dbReference type="ExpressionAtlas" id="P19785">
    <property type="expression patterns" value="baseline and differential"/>
</dbReference>
<dbReference type="GO" id="GO:0005737">
    <property type="term" value="C:cytoplasm"/>
    <property type="evidence" value="ECO:0000314"/>
    <property type="project" value="MGI"/>
</dbReference>
<dbReference type="GO" id="GO:0000791">
    <property type="term" value="C:euchromatin"/>
    <property type="evidence" value="ECO:0007669"/>
    <property type="project" value="Ensembl"/>
</dbReference>
<dbReference type="GO" id="GO:0005794">
    <property type="term" value="C:Golgi apparatus"/>
    <property type="evidence" value="ECO:0007669"/>
    <property type="project" value="UniProtKB-SubCell"/>
</dbReference>
<dbReference type="GO" id="GO:0005634">
    <property type="term" value="C:nucleus"/>
    <property type="evidence" value="ECO:0000314"/>
    <property type="project" value="MGI"/>
</dbReference>
<dbReference type="GO" id="GO:0005886">
    <property type="term" value="C:plasma membrane"/>
    <property type="evidence" value="ECO:0007669"/>
    <property type="project" value="UniProtKB-SubCell"/>
</dbReference>
<dbReference type="GO" id="GO:0005667">
    <property type="term" value="C:transcription regulator complex"/>
    <property type="evidence" value="ECO:0007669"/>
    <property type="project" value="Ensembl"/>
</dbReference>
<dbReference type="GO" id="GO:0071889">
    <property type="term" value="F:14-3-3 protein binding"/>
    <property type="evidence" value="ECO:0007669"/>
    <property type="project" value="Ensembl"/>
</dbReference>
<dbReference type="GO" id="GO:0051117">
    <property type="term" value="F:ATPase binding"/>
    <property type="evidence" value="ECO:0000266"/>
    <property type="project" value="MGI"/>
</dbReference>
<dbReference type="GO" id="GO:0008013">
    <property type="term" value="F:beta-catenin binding"/>
    <property type="evidence" value="ECO:0007669"/>
    <property type="project" value="Ensembl"/>
</dbReference>
<dbReference type="GO" id="GO:0003682">
    <property type="term" value="F:chromatin binding"/>
    <property type="evidence" value="ECO:0000314"/>
    <property type="project" value="MGI"/>
</dbReference>
<dbReference type="GO" id="GO:0001228">
    <property type="term" value="F:DNA-binding transcription activator activity, RNA polymerase II-specific"/>
    <property type="evidence" value="ECO:0007669"/>
    <property type="project" value="Ensembl"/>
</dbReference>
<dbReference type="GO" id="GO:0034056">
    <property type="term" value="F:estrogen response element binding"/>
    <property type="evidence" value="ECO:0007669"/>
    <property type="project" value="Ensembl"/>
</dbReference>
<dbReference type="GO" id="GO:0042802">
    <property type="term" value="F:identical protein binding"/>
    <property type="evidence" value="ECO:0007669"/>
    <property type="project" value="Ensembl"/>
</dbReference>
<dbReference type="GO" id="GO:0030284">
    <property type="term" value="F:nuclear estrogen receptor activity"/>
    <property type="evidence" value="ECO:0007669"/>
    <property type="project" value="Ensembl"/>
</dbReference>
<dbReference type="GO" id="GO:0030331">
    <property type="term" value="F:nuclear estrogen receptor binding"/>
    <property type="evidence" value="ECO:0007669"/>
    <property type="project" value="Ensembl"/>
</dbReference>
<dbReference type="GO" id="GO:0004879">
    <property type="term" value="F:nuclear receptor activity"/>
    <property type="evidence" value="ECO:0000314"/>
    <property type="project" value="MGI"/>
</dbReference>
<dbReference type="GO" id="GO:0019901">
    <property type="term" value="F:protein kinase binding"/>
    <property type="evidence" value="ECO:0007669"/>
    <property type="project" value="Ensembl"/>
</dbReference>
<dbReference type="GO" id="GO:0043565">
    <property type="term" value="F:sequence-specific DNA binding"/>
    <property type="evidence" value="ECO:0000314"/>
    <property type="project" value="UniProtKB"/>
</dbReference>
<dbReference type="GO" id="GO:0005496">
    <property type="term" value="F:steroid binding"/>
    <property type="evidence" value="ECO:0000250"/>
    <property type="project" value="UniProtKB"/>
</dbReference>
<dbReference type="GO" id="GO:0017025">
    <property type="term" value="F:TBP-class protein binding"/>
    <property type="evidence" value="ECO:0007669"/>
    <property type="project" value="Ensembl"/>
</dbReference>
<dbReference type="GO" id="GO:0001093">
    <property type="term" value="F:TFIIB-class transcription factor binding"/>
    <property type="evidence" value="ECO:0007669"/>
    <property type="project" value="Ensembl"/>
</dbReference>
<dbReference type="GO" id="GO:0001223">
    <property type="term" value="F:transcription coactivator binding"/>
    <property type="evidence" value="ECO:0007669"/>
    <property type="project" value="Ensembl"/>
</dbReference>
<dbReference type="GO" id="GO:0001222">
    <property type="term" value="F:transcription corepressor binding"/>
    <property type="evidence" value="ECO:0007669"/>
    <property type="project" value="Ensembl"/>
</dbReference>
<dbReference type="GO" id="GO:0008134">
    <property type="term" value="F:transcription factor binding"/>
    <property type="evidence" value="ECO:0000353"/>
    <property type="project" value="UniProtKB"/>
</dbReference>
<dbReference type="GO" id="GO:0008270">
    <property type="term" value="F:zinc ion binding"/>
    <property type="evidence" value="ECO:0007669"/>
    <property type="project" value="UniProtKB-KW"/>
</dbReference>
<dbReference type="GO" id="GO:0008209">
    <property type="term" value="P:androgen metabolic process"/>
    <property type="evidence" value="ECO:0000315"/>
    <property type="project" value="MGI"/>
</dbReference>
<dbReference type="GO" id="GO:0001547">
    <property type="term" value="P:antral ovarian follicle growth"/>
    <property type="evidence" value="ECO:0000315"/>
    <property type="project" value="MGI"/>
</dbReference>
<dbReference type="GO" id="GO:0071392">
    <property type="term" value="P:cellular response to estradiol stimulus"/>
    <property type="evidence" value="ECO:0000314"/>
    <property type="project" value="UniProtKB"/>
</dbReference>
<dbReference type="GO" id="GO:0071391">
    <property type="term" value="P:cellular response to estrogen stimulus"/>
    <property type="evidence" value="ECO:0000315"/>
    <property type="project" value="MGI"/>
</dbReference>
<dbReference type="GO" id="GO:0002064">
    <property type="term" value="P:epithelial cell development"/>
    <property type="evidence" value="ECO:0000315"/>
    <property type="project" value="MGI"/>
</dbReference>
<dbReference type="GO" id="GO:0060750">
    <property type="term" value="P:epithelial cell proliferation involved in mammary gland duct elongation"/>
    <property type="evidence" value="ECO:0000315"/>
    <property type="project" value="MGI"/>
</dbReference>
<dbReference type="GO" id="GO:0030520">
    <property type="term" value="P:estrogen receptor signaling pathway"/>
    <property type="evidence" value="ECO:0007669"/>
    <property type="project" value="Ensembl"/>
</dbReference>
<dbReference type="GO" id="GO:0048144">
    <property type="term" value="P:fibroblast proliferation"/>
    <property type="evidence" value="ECO:0000315"/>
    <property type="project" value="MGI"/>
</dbReference>
<dbReference type="GO" id="GO:0008584">
    <property type="term" value="P:male gonad development"/>
    <property type="evidence" value="ECO:0000315"/>
    <property type="project" value="MGI"/>
</dbReference>
<dbReference type="GO" id="GO:0060749">
    <property type="term" value="P:mammary gland alveolus development"/>
    <property type="evidence" value="ECO:0000315"/>
    <property type="project" value="MGI"/>
</dbReference>
<dbReference type="GO" id="GO:0060745">
    <property type="term" value="P:mammary gland branching involved in pregnancy"/>
    <property type="evidence" value="ECO:0000315"/>
    <property type="project" value="MGI"/>
</dbReference>
<dbReference type="GO" id="GO:0043124">
    <property type="term" value="P:negative regulation of canonical NF-kappaB signal transduction"/>
    <property type="evidence" value="ECO:0000250"/>
    <property type="project" value="UniProtKB"/>
</dbReference>
<dbReference type="GO" id="GO:0043433">
    <property type="term" value="P:negative regulation of DNA-binding transcription factor activity"/>
    <property type="evidence" value="ECO:0000250"/>
    <property type="project" value="UniProtKB"/>
</dbReference>
<dbReference type="GO" id="GO:0010629">
    <property type="term" value="P:negative regulation of gene expression"/>
    <property type="evidence" value="ECO:0007669"/>
    <property type="project" value="Ensembl"/>
</dbReference>
<dbReference type="GO" id="GO:1902894">
    <property type="term" value="P:negative regulation of miRNA transcription"/>
    <property type="evidence" value="ECO:0007669"/>
    <property type="project" value="Ensembl"/>
</dbReference>
<dbReference type="GO" id="GO:0045839">
    <property type="term" value="P:negative regulation of mitotic nuclear division"/>
    <property type="evidence" value="ECO:0000303"/>
    <property type="project" value="UniProtKB"/>
</dbReference>
<dbReference type="GO" id="GO:0034392">
    <property type="term" value="P:negative regulation of smooth muscle cell apoptotic process"/>
    <property type="evidence" value="ECO:0000250"/>
    <property type="project" value="UniProtKB"/>
</dbReference>
<dbReference type="GO" id="GO:0000122">
    <property type="term" value="P:negative regulation of transcription by RNA polymerase II"/>
    <property type="evidence" value="ECO:0007669"/>
    <property type="project" value="Ensembl"/>
</dbReference>
<dbReference type="GO" id="GO:0030518">
    <property type="term" value="P:nuclear receptor-mediated steroid hormone signaling pathway"/>
    <property type="evidence" value="ECO:0000250"/>
    <property type="project" value="UniProtKB"/>
</dbReference>
<dbReference type="GO" id="GO:0007200">
    <property type="term" value="P:phospholipase C-activating G protein-coupled receptor signaling pathway"/>
    <property type="evidence" value="ECO:0000250"/>
    <property type="project" value="UniProtKB"/>
</dbReference>
<dbReference type="GO" id="GO:0007204">
    <property type="term" value="P:positive regulation of cytosolic calcium ion concentration"/>
    <property type="evidence" value="ECO:0000250"/>
    <property type="project" value="UniProtKB"/>
</dbReference>
<dbReference type="GO" id="GO:0051091">
    <property type="term" value="P:positive regulation of DNA-binding transcription factor activity"/>
    <property type="evidence" value="ECO:0000250"/>
    <property type="project" value="UniProtKB"/>
</dbReference>
<dbReference type="GO" id="GO:0045893">
    <property type="term" value="P:positive regulation of DNA-templated transcription"/>
    <property type="evidence" value="ECO:0000250"/>
    <property type="project" value="UniProtKB"/>
</dbReference>
<dbReference type="GO" id="GO:0048146">
    <property type="term" value="P:positive regulation of fibroblast proliferation"/>
    <property type="evidence" value="ECO:0000315"/>
    <property type="project" value="MGI"/>
</dbReference>
<dbReference type="GO" id="GO:0045429">
    <property type="term" value="P:positive regulation of nitric oxide biosynthetic process"/>
    <property type="evidence" value="ECO:0000250"/>
    <property type="project" value="UniProtKB"/>
</dbReference>
<dbReference type="GO" id="GO:0051000">
    <property type="term" value="P:positive regulation of nitric-oxide synthase activity"/>
    <property type="evidence" value="ECO:0000250"/>
    <property type="project" value="UniProtKB"/>
</dbReference>
<dbReference type="GO" id="GO:0045944">
    <property type="term" value="P:positive regulation of transcription by RNA polymerase II"/>
    <property type="evidence" value="ECO:0000315"/>
    <property type="project" value="MGI"/>
</dbReference>
<dbReference type="GO" id="GO:0060527">
    <property type="term" value="P:prostate epithelial cord arborization involved in prostate glandular acinus morphogenesis"/>
    <property type="evidence" value="ECO:0000315"/>
    <property type="project" value="MGI"/>
</dbReference>
<dbReference type="GO" id="GO:0060523">
    <property type="term" value="P:prostate epithelial cord elongation"/>
    <property type="evidence" value="ECO:0000315"/>
    <property type="project" value="MGI"/>
</dbReference>
<dbReference type="GO" id="GO:0071168">
    <property type="term" value="P:protein localization to chromatin"/>
    <property type="evidence" value="ECO:0007669"/>
    <property type="project" value="Ensembl"/>
</dbReference>
<dbReference type="GO" id="GO:0060687">
    <property type="term" value="P:regulation of branching involved in prostate gland morphogenesis"/>
    <property type="evidence" value="ECO:0000315"/>
    <property type="project" value="MGI"/>
</dbReference>
<dbReference type="GO" id="GO:0006355">
    <property type="term" value="P:regulation of DNA-templated transcription"/>
    <property type="evidence" value="ECO:0000314"/>
    <property type="project" value="MGI"/>
</dbReference>
<dbReference type="GO" id="GO:1904035">
    <property type="term" value="P:regulation of epithelial cell apoptotic process"/>
    <property type="evidence" value="ECO:0000315"/>
    <property type="project" value="MGI"/>
</dbReference>
<dbReference type="GO" id="GO:0050727">
    <property type="term" value="P:regulation of inflammatory response"/>
    <property type="evidence" value="ECO:0000315"/>
    <property type="project" value="MGI"/>
</dbReference>
<dbReference type="GO" id="GO:0034121">
    <property type="term" value="P:regulation of toll-like receptor signaling pathway"/>
    <property type="evidence" value="ECO:0000315"/>
    <property type="project" value="MGI"/>
</dbReference>
<dbReference type="GO" id="GO:0051123">
    <property type="term" value="P:RNA polymerase II preinitiation complex assembly"/>
    <property type="evidence" value="ECO:0007669"/>
    <property type="project" value="Ensembl"/>
</dbReference>
<dbReference type="GO" id="GO:0048863">
    <property type="term" value="P:stem cell differentiation"/>
    <property type="evidence" value="ECO:0000314"/>
    <property type="project" value="CAFA"/>
</dbReference>
<dbReference type="GO" id="GO:0006366">
    <property type="term" value="P:transcription by RNA polymerase II"/>
    <property type="evidence" value="ECO:0000315"/>
    <property type="project" value="MGI"/>
</dbReference>
<dbReference type="GO" id="GO:0060065">
    <property type="term" value="P:uterus development"/>
    <property type="evidence" value="ECO:0000316"/>
    <property type="project" value="MGI"/>
</dbReference>
<dbReference type="GO" id="GO:0060068">
    <property type="term" value="P:vagina development"/>
    <property type="evidence" value="ECO:0000316"/>
    <property type="project" value="MGI"/>
</dbReference>
<dbReference type="CDD" id="cd07171">
    <property type="entry name" value="NR_DBD_ER"/>
    <property type="match status" value="1"/>
</dbReference>
<dbReference type="CDD" id="cd06949">
    <property type="entry name" value="NR_LBD_ER"/>
    <property type="match status" value="1"/>
</dbReference>
<dbReference type="FunFam" id="1.10.565.10:FF:000010">
    <property type="entry name" value="Estrogen receptor"/>
    <property type="match status" value="1"/>
</dbReference>
<dbReference type="FunFam" id="3.30.50.10:FF:000014">
    <property type="entry name" value="Estrogen receptor beta"/>
    <property type="match status" value="1"/>
</dbReference>
<dbReference type="Gene3D" id="3.30.50.10">
    <property type="entry name" value="Erythroid Transcription Factor GATA-1, subunit A"/>
    <property type="match status" value="1"/>
</dbReference>
<dbReference type="Gene3D" id="1.10.565.10">
    <property type="entry name" value="Retinoid X Receptor"/>
    <property type="match status" value="1"/>
</dbReference>
<dbReference type="InterPro" id="IPR024178">
    <property type="entry name" value="Est_rcpt/est-rel_rcp"/>
</dbReference>
<dbReference type="InterPro" id="IPR001292">
    <property type="entry name" value="Estr_rcpt"/>
</dbReference>
<dbReference type="InterPro" id="IPR046944">
    <property type="entry name" value="Estr_rcpt_N"/>
</dbReference>
<dbReference type="InterPro" id="IPR035500">
    <property type="entry name" value="NHR-like_dom_sf"/>
</dbReference>
<dbReference type="InterPro" id="IPR000536">
    <property type="entry name" value="Nucl_hrmn_rcpt_lig-bd"/>
</dbReference>
<dbReference type="InterPro" id="IPR050200">
    <property type="entry name" value="Nuclear_hormone_rcpt_NR3"/>
</dbReference>
<dbReference type="InterPro" id="IPR001723">
    <property type="entry name" value="Nuclear_hrmn_rcpt"/>
</dbReference>
<dbReference type="InterPro" id="IPR024736">
    <property type="entry name" value="Oestrogen-typ_rcpt_final_C_dom"/>
</dbReference>
<dbReference type="InterPro" id="IPR001628">
    <property type="entry name" value="Znf_hrmn_rcpt"/>
</dbReference>
<dbReference type="InterPro" id="IPR013088">
    <property type="entry name" value="Znf_NHR/GATA"/>
</dbReference>
<dbReference type="PANTHER" id="PTHR48092">
    <property type="entry name" value="KNIRPS-RELATED PROTEIN-RELATED"/>
    <property type="match status" value="1"/>
</dbReference>
<dbReference type="Pfam" id="PF12743">
    <property type="entry name" value="ESR1_C"/>
    <property type="match status" value="1"/>
</dbReference>
<dbReference type="Pfam" id="PF00104">
    <property type="entry name" value="Hormone_recep"/>
    <property type="match status" value="1"/>
</dbReference>
<dbReference type="Pfam" id="PF02159">
    <property type="entry name" value="Oest_recep"/>
    <property type="match status" value="1"/>
</dbReference>
<dbReference type="Pfam" id="PF00105">
    <property type="entry name" value="zf-C4"/>
    <property type="match status" value="1"/>
</dbReference>
<dbReference type="PIRSF" id="PIRSF500101">
    <property type="entry name" value="ER-a"/>
    <property type="match status" value="1"/>
</dbReference>
<dbReference type="PIRSF" id="PIRSF002527">
    <property type="entry name" value="ER-like_NR"/>
    <property type="match status" value="1"/>
</dbReference>
<dbReference type="PRINTS" id="PR00543">
    <property type="entry name" value="OESTROGENR"/>
</dbReference>
<dbReference type="PRINTS" id="PR00398">
    <property type="entry name" value="STRDHORMONER"/>
</dbReference>
<dbReference type="PRINTS" id="PR00047">
    <property type="entry name" value="STROIDFINGER"/>
</dbReference>
<dbReference type="SMART" id="SM00430">
    <property type="entry name" value="HOLI"/>
    <property type="match status" value="1"/>
</dbReference>
<dbReference type="SMART" id="SM00399">
    <property type="entry name" value="ZnF_C4"/>
    <property type="match status" value="1"/>
</dbReference>
<dbReference type="SUPFAM" id="SSF57716">
    <property type="entry name" value="Glucocorticoid receptor-like (DNA-binding domain)"/>
    <property type="match status" value="1"/>
</dbReference>
<dbReference type="SUPFAM" id="SSF48508">
    <property type="entry name" value="Nuclear receptor ligand-binding domain"/>
    <property type="match status" value="1"/>
</dbReference>
<dbReference type="PROSITE" id="PS51843">
    <property type="entry name" value="NR_LBD"/>
    <property type="match status" value="1"/>
</dbReference>
<dbReference type="PROSITE" id="PS00031">
    <property type="entry name" value="NUCLEAR_REC_DBD_1"/>
    <property type="match status" value="1"/>
</dbReference>
<dbReference type="PROSITE" id="PS51030">
    <property type="entry name" value="NUCLEAR_REC_DBD_2"/>
    <property type="match status" value="1"/>
</dbReference>
<organism>
    <name type="scientific">Mus musculus</name>
    <name type="common">Mouse</name>
    <dbReference type="NCBI Taxonomy" id="10090"/>
    <lineage>
        <taxon>Eukaryota</taxon>
        <taxon>Metazoa</taxon>
        <taxon>Chordata</taxon>
        <taxon>Craniata</taxon>
        <taxon>Vertebrata</taxon>
        <taxon>Euteleostomi</taxon>
        <taxon>Mammalia</taxon>
        <taxon>Eutheria</taxon>
        <taxon>Euarchontoglires</taxon>
        <taxon>Glires</taxon>
        <taxon>Rodentia</taxon>
        <taxon>Myomorpha</taxon>
        <taxon>Muroidea</taxon>
        <taxon>Muridae</taxon>
        <taxon>Murinae</taxon>
        <taxon>Mus</taxon>
        <taxon>Mus</taxon>
    </lineage>
</organism>
<name>ESR1_MOUSE</name>
<gene>
    <name type="primary">Esr1</name>
    <name type="synonym">Esr</name>
    <name type="synonym">Estr</name>
    <name type="synonym">Estra</name>
    <name type="synonym">Nr3a1</name>
</gene>
<proteinExistence type="evidence at protein level"/>
<keyword id="KW-0010">Activator</keyword>
<keyword id="KW-1003">Cell membrane</keyword>
<keyword id="KW-0963">Cytoplasm</keyword>
<keyword id="KW-0238">DNA-binding</keyword>
<keyword id="KW-0325">Glycoprotein</keyword>
<keyword id="KW-0333">Golgi apparatus</keyword>
<keyword id="KW-0446">Lipid-binding</keyword>
<keyword id="KW-0449">Lipoprotein</keyword>
<keyword id="KW-0472">Membrane</keyword>
<keyword id="KW-0479">Metal-binding</keyword>
<keyword id="KW-0488">Methylation</keyword>
<keyword id="KW-0539">Nucleus</keyword>
<keyword id="KW-0564">Palmitate</keyword>
<keyword id="KW-0597">Phosphoprotein</keyword>
<keyword id="KW-0675">Receptor</keyword>
<keyword id="KW-1185">Reference proteome</keyword>
<keyword id="KW-0754">Steroid-binding</keyword>
<keyword id="KW-0804">Transcription</keyword>
<keyword id="KW-0805">Transcription regulation</keyword>
<keyword id="KW-0832">Ubl conjugation</keyword>
<keyword id="KW-0862">Zinc</keyword>
<keyword id="KW-0863">Zinc-finger</keyword>
<accession>P19785</accession>
<accession>Q9JJT5</accession>
<accession>Q9QY51</accession>
<accession>Q9QY52</accession>
<feature type="chain" id="PRO_0000053621" description="Estrogen receptor">
    <location>
        <begin position="1"/>
        <end position="599"/>
    </location>
</feature>
<feature type="domain" description="NR LBD" evidence="5">
    <location>
        <begin position="315"/>
        <end position="551"/>
    </location>
</feature>
<feature type="DNA-binding region" description="Nuclear receptor" evidence="4">
    <location>
        <begin position="189"/>
        <end position="254"/>
    </location>
</feature>
<feature type="zinc finger region" description="NR C4-type" evidence="4">
    <location>
        <begin position="189"/>
        <end position="209"/>
    </location>
</feature>
<feature type="zinc finger region" description="NR C4-type" evidence="4">
    <location>
        <begin position="225"/>
        <end position="249"/>
    </location>
</feature>
<feature type="region of interest" description="Modulating (transactivation AF-1); mediates interaction with MACROD1" evidence="1">
    <location>
        <begin position="1"/>
        <end position="188"/>
    </location>
</feature>
<feature type="region of interest" description="Interaction with DDX5; self-association" evidence="1">
    <location>
        <begin position="35"/>
        <end position="178"/>
    </location>
</feature>
<feature type="region of interest" description="Required for interaction with NCOA1" evidence="1">
    <location>
        <begin position="35"/>
        <end position="47"/>
    </location>
</feature>
<feature type="region of interest" description="Disordered" evidence="6">
    <location>
        <begin position="147"/>
        <end position="175"/>
    </location>
</feature>
<feature type="region of interest" description="Mediates interaction with DNTTIP2" evidence="1">
    <location>
        <begin position="189"/>
        <end position="314"/>
    </location>
</feature>
<feature type="region of interest" description="Hinge">
    <location>
        <begin position="255"/>
        <end position="314"/>
    </location>
</feature>
<feature type="region of interest" description="Interaction with AKAP13" evidence="1">
    <location>
        <begin position="266"/>
        <end position="599"/>
    </location>
</feature>
<feature type="region of interest" description="Self-association" evidence="1">
    <location>
        <begin position="268"/>
        <end position="599"/>
    </location>
</feature>
<feature type="region of interest" description="Transactivation AF-2" evidence="1">
    <location>
        <begin position="315"/>
        <end position="599"/>
    </location>
</feature>
<feature type="region of interest" description="Disordered" evidence="6">
    <location>
        <begin position="557"/>
        <end position="581"/>
    </location>
</feature>
<feature type="compositionally biased region" description="Basic and acidic residues" evidence="6">
    <location>
        <begin position="158"/>
        <end position="169"/>
    </location>
</feature>
<feature type="compositionally biased region" description="Low complexity" evidence="6">
    <location>
        <begin position="568"/>
        <end position="581"/>
    </location>
</feature>
<feature type="binding site" evidence="2">
    <location>
        <position position="357"/>
    </location>
    <ligand>
        <name>17beta-estradiol</name>
        <dbReference type="ChEBI" id="CHEBI:16469"/>
    </ligand>
</feature>
<feature type="binding site" evidence="2">
    <location>
        <position position="398"/>
    </location>
    <ligand>
        <name>17beta-estradiol</name>
        <dbReference type="ChEBI" id="CHEBI:16469"/>
    </ligand>
</feature>
<feature type="binding site" evidence="2">
    <location>
        <position position="528"/>
    </location>
    <ligand>
        <name>17beta-estradiol</name>
        <dbReference type="ChEBI" id="CHEBI:16469"/>
    </ligand>
</feature>
<feature type="modified residue" description="Phosphoserine; by CDK2" evidence="2">
    <location>
        <position position="108"/>
    </location>
</feature>
<feature type="modified residue" description="Phosphoserine; by CDK2" evidence="2">
    <location>
        <position position="110"/>
    </location>
</feature>
<feature type="modified residue" description="Phosphoserine" evidence="2">
    <location>
        <position position="122"/>
    </location>
</feature>
<feature type="modified residue" description="Phosphoserine; by CK2" evidence="2">
    <location>
        <position position="171"/>
    </location>
</feature>
<feature type="modified residue" description="Asymmetric dimethylarginine; by PRMT1" evidence="2">
    <location>
        <position position="264"/>
    </location>
</feature>
<feature type="modified residue" description="Phosphotyrosine; by Tyr-kinases" evidence="2">
    <location>
        <position position="541"/>
    </location>
</feature>
<feature type="lipid moiety-binding region" description="S-palmitoyl cysteine" evidence="15">
    <location>
        <position position="451"/>
    </location>
</feature>
<feature type="glycosylation site" description="O-linked (GlcNAc) serine" evidence="10">
    <location>
        <position position="10"/>
    </location>
</feature>
<feature type="glycosylation site" description="O-linked (GlcNAc) threonine" evidence="10">
    <location>
        <position position="50"/>
    </location>
</feature>
<feature type="glycosylation site" id="CAR_000137" description="O-linked (GlcNAc) threonine" evidence="10 17">
    <location>
        <position position="575"/>
    </location>
</feature>
<feature type="sequence variant" description="In strain: SJL/J." evidence="20">
    <original>E</original>
    <variation>Q</variation>
    <location>
        <position position="591"/>
    </location>
</feature>
<feature type="mutagenesis site" description="No effect on transcriptional activity and estrogen-induced interaction with NCOA1. Abolishes estrogen-induced interaction with NCOA1; when associated with A-376 and A-380." evidence="7">
    <original>I</original>
    <variation>A</variation>
    <location>
        <position position="362"/>
    </location>
</feature>
<feature type="mutagenesis site" description="Abolishes transcriptional activity and estrogen-induced interaction with NCOA1." evidence="7">
    <original>I</original>
    <variation>D</variation>
    <location>
        <position position="362"/>
    </location>
</feature>
<feature type="mutagenesis site" description="Greatly reduces transcriptional activity and estrogen-induced interaction with NCOA1." evidence="7">
    <original>K</original>
    <variation>A</variation>
    <location>
        <position position="366"/>
    </location>
</feature>
<feature type="mutagenesis site" description="Abolishes transcriptional activity and estrogen-induced interaction with NCOA1." evidence="7">
    <original>K</original>
    <variation>D</variation>
    <location>
        <position position="366"/>
    </location>
</feature>
<feature type="mutagenesis site" description="Reduces transcriptional activity and estrogen-induced interaction with NCOA1." evidence="7">
    <original>K</original>
    <variation>L</variation>
    <location>
        <position position="366"/>
    </location>
</feature>
<feature type="mutagenesis site" description="Abolishes estrogen-dependent NF-kappa B transcriptional repression, impairs transcriptional activity, abolishes estrogen-induced interaction with NCOA1." evidence="9">
    <original>F</original>
    <variation>A</variation>
    <location>
        <position position="371"/>
    </location>
</feature>
<feature type="mutagenesis site" description="Reduces transcriptional activity, no effect on estrogen-induced interaction with NCOA1. Abolishes estrogen-induced interaction with NCOA1; when associated with A-362 and A-380." evidence="7">
    <original>L</original>
    <variation>A</variation>
    <location>
        <position position="376"/>
    </location>
</feature>
<feature type="mutagenesis site" description="Reduces transcriptional activity and estrogen-induced interaction with NCOA1." evidence="7">
    <original>L</original>
    <variation>D</variation>
    <location>
        <position position="376"/>
    </location>
</feature>
<feature type="mutagenesis site" description="No effect on transcriptional activity and estrogen-induced interaction with NCOA1. Abolishes estrogen-induced interaction with NCOA1; when associated with A-362 and A-376." evidence="7">
    <original>V</original>
    <variation>A</variation>
    <location>
        <position position="380"/>
    </location>
</feature>
<feature type="mutagenesis site" description="Abolishes transcriptional activity and estrogen-induced interaction with NCOA1." evidence="7">
    <original>V</original>
    <variation>D</variation>
    <location>
        <position position="380"/>
    </location>
</feature>
<feature type="mutagenesis site" description="Loss of ZDHHC7 and ZDHHC21 binding. Loss of palmitoylation." evidence="15">
    <original>C</original>
    <variation>A</variation>
    <location>
        <position position="451"/>
    </location>
</feature>
<feature type="mutagenesis site" description="Reduces DNA-binding, attenuates transcriptional activity, does not effect estrogen-dependent NF-kappa B transcriptional repression; when associated with E-512 and E-515." evidence="9">
    <original>L</original>
    <variation>A</variation>
    <location>
        <position position="508"/>
    </location>
</feature>
<feature type="mutagenesis site" description="Abolishes DNA-binding, abolishes transcriptional activity and estrogen-dependent NF-kappa B transcriptional repression; when associated with E-512 and E-515." evidence="9">
    <original>L</original>
    <variation>E</variation>
    <location>
        <position position="508"/>
    </location>
</feature>
<feature type="mutagenesis site" description="Reduces DNA-binding,, attenuates transcriptional activity, does not effect estrogen-dependent NF-kappa B transcriptional repression." evidence="9">
    <original>A</original>
    <variation>E</variation>
    <location>
        <position position="509"/>
    </location>
</feature>
<feature type="mutagenesis site" description="Reduces DNA-binding, attenuates transcriptional activity, does not effect estrogen-dependent NF-kappa B transcriptional repression; when associated with E-508 and E-515." evidence="9">
    <original>L</original>
    <variation>A</variation>
    <location>
        <position position="512"/>
    </location>
</feature>
<feature type="mutagenesis site" description="Abolishes DNA-binding, abolishes transcriptional activity and estrogen-dependent NF-kappa B transcriptional repression; when associated with E-508 and E-515." evidence="9">
    <original>L</original>
    <variation>E</variation>
    <location>
        <position position="512"/>
    </location>
</feature>
<feature type="mutagenesis site" description="Reduces DNA-binding, attenuates transcriptional activity, does not effect estrogen-dependent NF-kappa B transcriptional repression; when associated with E-508 and E-512." evidence="9">
    <original>L</original>
    <variation>A</variation>
    <location>
        <position position="515"/>
    </location>
</feature>
<feature type="mutagenesis site" description="Abolishes DNA-binding, abolishes transcriptional activity and estrogen-dependent NF-kappa B transcriptional repression; when associated with E-508 and E-512." evidence="9">
    <original>L</original>
    <variation>E</variation>
    <location>
        <position position="515"/>
    </location>
</feature>
<feature type="mutagenesis site" description="Abolishes estrogen binding; impairs repression of NF-kappa activity." evidence="9">
    <original>G</original>
    <variation>R</variation>
    <location>
        <position position="525"/>
    </location>
</feature>
<feature type="mutagenesis site" description="Abolishes estrogen-dependent NF-kappa B transcriptional repression, impairs transcriptional activity, impairs estrogen-induced interaction with NCOA1; when associated with Q-546 and N-548." evidence="9">
    <original>D</original>
    <variation>N</variation>
    <location>
        <position position="542"/>
    </location>
</feature>
<feature type="mutagenesis site" description="Abolishes estrogen-dependent NF-kappa B transcriptional repression, abolishes estrogen-induced interaction with NCOA1." evidence="9">
    <original>LL</original>
    <variation>AA</variation>
    <location>
        <begin position="543"/>
        <end position="544"/>
    </location>
</feature>
<feature type="mutagenesis site" description="Abolishes estrogen-induced interaction with NCOA1." evidence="7">
    <original>L</original>
    <variation>A</variation>
    <location>
        <position position="543"/>
    </location>
</feature>
<feature type="mutagenesis site" description="Abolishes estrogen-dependent NF-kappa B transcriptional repression, impairs transcriptional activity, impairs estrogen-induced interaction with NCOA1; when associated with N-542 and N-548." evidence="9">
    <original>E</original>
    <variation>Q</variation>
    <location>
        <position position="546"/>
    </location>
</feature>
<feature type="mutagenesis site" description="No effect on estrogen-dependent NF-kappa B transcriptional repression, greatly impairs transcriptional activity, abolishes estrogen-induced interaction with NCOA1." evidence="9">
    <original>ML</original>
    <variation>AA</variation>
    <location>
        <begin position="547"/>
        <end position="548"/>
    </location>
</feature>
<feature type="mutagenesis site" description="Abolishes estrogen-dependent NF-kappa B transcriptional repression, impairs transcriptional activity, impairs estrogen-induced interaction with NCOA1; when associated with N-542 and Q-546." evidence="9">
    <original>D</original>
    <variation>N</variation>
    <location>
        <position position="549"/>
    </location>
</feature>
<feature type="sequence conflict" description="In Ref. 4; AAF22561." evidence="21" ref="4">
    <original>L</original>
    <variation>M</variation>
    <location>
        <position position="269"/>
    </location>
</feature>
<evidence type="ECO:0000250" key="1"/>
<evidence type="ECO:0000250" key="2">
    <source>
        <dbReference type="UniProtKB" id="P03372"/>
    </source>
</evidence>
<evidence type="ECO:0000250" key="3">
    <source>
        <dbReference type="UniProtKB" id="P06211"/>
    </source>
</evidence>
<evidence type="ECO:0000255" key="4">
    <source>
        <dbReference type="PROSITE-ProRule" id="PRU00407"/>
    </source>
</evidence>
<evidence type="ECO:0000255" key="5">
    <source>
        <dbReference type="PROSITE-ProRule" id="PRU01189"/>
    </source>
</evidence>
<evidence type="ECO:0000256" key="6">
    <source>
        <dbReference type="SAM" id="MobiDB-lite"/>
    </source>
</evidence>
<evidence type="ECO:0000269" key="7">
    <source>
    </source>
</evidence>
<evidence type="ECO:0000269" key="8">
    <source>
    </source>
</evidence>
<evidence type="ECO:0000269" key="9">
    <source>
    </source>
</evidence>
<evidence type="ECO:0000269" key="10">
    <source>
    </source>
</evidence>
<evidence type="ECO:0000269" key="11">
    <source>
    </source>
</evidence>
<evidence type="ECO:0000269" key="12">
    <source>
    </source>
</evidence>
<evidence type="ECO:0000269" key="13">
    <source>
    </source>
</evidence>
<evidence type="ECO:0000269" key="14">
    <source>
    </source>
</evidence>
<evidence type="ECO:0000269" key="15">
    <source>
    </source>
</evidence>
<evidence type="ECO:0000269" key="16">
    <source>
    </source>
</evidence>
<evidence type="ECO:0000269" key="17">
    <source>
    </source>
</evidence>
<evidence type="ECO:0000269" key="18">
    <source>
    </source>
</evidence>
<evidence type="ECO:0000269" key="19">
    <source>
    </source>
</evidence>
<evidence type="ECO:0000269" key="20">
    <source ref="4"/>
</evidence>
<evidence type="ECO:0000305" key="21"/>
<comment type="function">
    <text evidence="3 7 9">Nuclear hormone receptor. The steroid hormones and their receptors are involved in the regulation of eukaryotic gene expression and affect cellular proliferation and differentiation in target tissues. Ligand-dependent nuclear transactivation involves either direct homodimer binding to a palindromic estrogen response element (ERE) sequence or association with other DNA-binding transcription factors, such as AP-1/c-Jun, c-Fos, ATF-2, Sp1 and Sp3, to mediate ERE-independent signaling. Ligand binding induces a conformational change allowing subsequent or combinatorial association with multiprotein coactivator complexes through LXXLL motifs of their respective components. Mutual transrepression occurs between the estrogen receptor (ER) and NF-kappa-B in a cell-type specific manner. Decreases NF-kappa-B DNA-binding activity and inhibits NF-kappa-B-mediated transcription from the IL6 promoter and displace RELA/p65 and associated coregulators from the promoter. Recruited to the NF-kappa-B response element of the CCL2 and IL8 promoters and can displace CREBBP. Present with NF-kappa-B components RELA/p65 and NFKB1/p50 on ERE sequences. Can also act synergistically with NF-kappa-B to activate transcription involving respective recruitment adjacent response elements; the function involves CREBBP. Can activate the transcriptional activity of TFF1. Also mediates membrane-initiated estrogen signaling involving various kinase cascades. Essential for MTA1-mediated transcriptional regulation of BRCA1 and BCAS3. Maintains neuronal survival in response to ischemic reperfusion injury when in the presence of circulating estradiol (17-beta-estradiol/E2) (By similarity).</text>
</comment>
<comment type="subunit">
    <text evidence="2 3 7 8 9 11 12 13 14 16 18 19">Interacts with BCAS3. Binds DNA as a homodimer (By similarity). Can form a heterodimer with ESR2 (By similarity). Interacts with coactivator NCOA5. Interacts with PELP1, the interaction is enhanced by 17-beta-estradiol; the interaction increases ESR1 transcriptional activity (By similarity). Interacts with NCOA7; the interaction is ligand-inducible. Interacts with AKAP13, CUEDC2, HEXIM1, KDM5A, MAP1S, SMARD1, and UBE1C. Interacts with MUC1; the interaction is stimulated by 7 beta-estradiol (E2) and enhances ESR1-mediated transcription. Interacts with DNTTIP2, and UIMC1. Interacts with KMT2D/MLL2. Interacts with ATAD2; the interaction is enhanced by estradiol. Interacts with KIF18A and LDB1. Interacts with RLIM (via its C-terminus). Interacts with MACROD1. Interacts with SH2D4A and PLCG. Interacts with SH2D4A; the interaction blocks binding to PLCG and inhibits estrogen-induced cell proliferation. Interacts with DYNLL1. Interacts with CCDC62; the interaction requires estradiol and appears to enhance the transcription of target genes. Interacts with NR2C1; the interaction prevents homodimerization of ESR1 and suppresses its transcriptional activity and cell growth. Interacts with DNAAF4. Interacts with PRMT2. Interacts with RBFOX2. Interacts with EP300; the interaction is estrogen-dependent and enhanced by CITED1. Interacts with CITED1; the interaction is estrogen-dependent (By similarity). Interacts with FAM120B, FOXL2, PHB2 and SLC30A9. Interacts with coactivators NCOA3 and NCOA6. Interacts with STK3/MST2 only in the presence of SAV1 and vice-versa. Binds to CSNK1D. Interacts with NCOA2; NCOA2 can interact with ESR1 AF-1 and AF-2 domains simultaneously and mediate their transcriptional synergy. Interacts with DDX5. Interacts with NCOA1; the interaction seems to require a self-association of N-terminal and C-terminal regions. Interacts with ZNF366, DDX17, NFKB1, RELA, SP1 and SP3. Interacts with NRIP1 (By similarity). Interacts with GPER1; the interaction occurs in an estrogen-dependent manner. Interacts with CLOCK and the interaction is stimulated by estrogen (By similarity). Interacts with BCAS3. Interacts with TRIP4 (ufmylated); estrogen dependent (By similarity). Interacts with LMTK3; the interaction phosphorylates ESR1 (in vitro) and protects it against proteasomal degradation. Interacts with CCAR2 (via N-terminus) in a ligand-independent manner. Interacts with ZFHX3 (By similarity). Interacts with SFR1 in a ligand-dependent and -independent manner (By similarity). Interacts with DCAF13, LATS1 and DCAF1; regulates ESR1 ubiquitination and ubiquitin-mediated proteasomal degradation (By similarity). Interacts (via DNA-binding domain) with POU4F2 isoform 2 (C-terminus); this interaction increases the estrogen receptor ESR1 transcriptional activity in a DNA- and ligand 17-beta-estradiol-independent manner (PubMed:9448000). Interacts with ESRRB isoform 1 (By similarity). Interacts with UBE3A and WBP2 (By similarity). Interacts with GTF2B (By similarity). Interacts with RBM39 (PubMed:11704680). In the absence of hormonal ligand, interacts with TACC1 (By similarity). Interacts with PI3KR1 or PI3KR2 and PTK2/FAK1 (By similarity). Interacts with SRC (By similarity). Interacts with BAG1; the interaction is promoted in the absence of estradiol (17-beta-estradiol/E2) (By similarity). Interacts with and ubiquitinated by STUB1; the interaction is promoted in the absence of estradiol (17-beta-estradiol/E2) (By similarity). Interacts with NEDD8 (By similarity).</text>
</comment>
<comment type="interaction">
    <interactant intactId="EBI-346765">
        <id>P19785</id>
    </interactant>
    <interactant intactId="EBI-346821">
        <id>Q00175</id>
        <label>Pgr</label>
    </interactant>
    <organismsDiffer>false</organismsDiffer>
    <experiments>5</experiments>
</comment>
<comment type="interaction">
    <interactant intactId="EBI-346765">
        <id>P19785</id>
    </interactant>
    <interactant intactId="EBI-455189">
        <id>Q15788</id>
        <label>NCOA1</label>
    </interactant>
    <organismsDiffer>true</organismsDiffer>
    <experiments>3</experiments>
</comment>
<comment type="interaction">
    <interactant intactId="EBI-346765">
        <id>P19785</id>
    </interactant>
    <interactant intactId="EBI-357067">
        <id>O94763</id>
        <label>URI1</label>
    </interactant>
    <organismsDiffer>true</organismsDiffer>
    <experiments>2</experiments>
</comment>
<comment type="subcellular location">
    <subcellularLocation>
        <location evidence="4">Nucleus</location>
    </subcellularLocation>
    <subcellularLocation>
        <location evidence="1">Cytoplasm</location>
    </subcellularLocation>
    <subcellularLocation>
        <location evidence="1">Golgi apparatus</location>
    </subcellularLocation>
    <subcellularLocation>
        <location evidence="1">Cell membrane</location>
    </subcellularLocation>
    <text evidence="1">Colocalizes with ZDHHC7 and ZDHHC21 in the Golgi apparatus where most probably palmitoylation occurs. Associated with the plasma membrane when palmitoylated.</text>
</comment>
<comment type="domain">
    <text evidence="1">Composed of three domains: a modulating N-terminal domain, a DNA-binding domain and a C-terminal ligand-binding domain. The modulating domain, also known as A/B or AF-1 domain has a ligand-independent transactivation function. The C-terminus contains a ligand-dependent transactivation domain, also known as E/F or AF-2 domain which overlaps with the ligand binding domain. AF-1 and AF-2 activate transcription independently and synergistically and act in a promoter- and cell-specific manner (By similarity).</text>
</comment>
<comment type="PTM">
    <text evidence="2">Phosphorylated by cyclin A/CDK2 and CK1. Phosphorylation probably enhances transcriptional activity. Dephosphorylation at Ser-122 by PPP5C inhibits its transactivation activity (By similarity). Phosphorylated by LMTK3 (in vitro) (By similarity).</text>
</comment>
<comment type="PTM">
    <text evidence="1">Ubiquitinated. Deubiquitinated by OTUB1 (By similarity).</text>
</comment>
<comment type="PTM">
    <text evidence="15">Palmitoylated at Cys-451 by ZDHHC7 and ZDHHC21. This modification is required for plasma membrane targeting and for rapid intracellular signaling via ERK and AKT kinases and cAMP generation, but not for signaling mediated by the nuclear hormone receptor.</text>
</comment>
<comment type="PTM">
    <text evidence="2 3">Ubiquitinated; regulated by LATS1 via DCAF1 it leads to ESR1 proteasomal degradation. Deubiquitinated by OTUB1 (By similarity). Ubiquitinated by STUB1/CHIP; in the CA1 hippocampal region following loss of endogenous circulating estradiol (17-beta-estradiol/E2) (By similarity). Ubiquitinated by UBR5, leading to its degradation: UBR5 specifically recognizes and binds ligand-bound ESR1 when it is not associated with coactivators (NCOAs). In presence of NCOAs, the UBR5-degron is not accessible, preventing its ubiquitination and degradation (By similarity).</text>
</comment>
<comment type="PTM">
    <text evidence="2">Dimethylated by PRMT1 at Arg-264. The methylation may favor cytoplasmic localization. Demethylated by JMJD6 at Arg-264.</text>
</comment>
<comment type="similarity">
    <text evidence="21">Belongs to the nuclear hormone receptor family. NR3 subfamily.</text>
</comment>
<protein>
    <recommendedName>
        <fullName>Estrogen receptor</fullName>
        <shortName>ER</shortName>
    </recommendedName>
    <alternativeName>
        <fullName>ER-alpha</fullName>
    </alternativeName>
    <alternativeName>
        <fullName>Estradiol receptor</fullName>
    </alternativeName>
    <alternativeName>
        <fullName>Nuclear receptor subfamily 3 group A member 1</fullName>
    </alternativeName>
</protein>
<sequence length="599" mass="66955">MTMTLHTKASGMALLHQIQGNELEPLNRPQLKMPMERALGEVYVDNSKPTVFNYPEGAAYEFNAAAAAAAAASAPVYGQSGIAYGPGSEAAAFSANSLGAFPQLNSVSPSPLMLLHPPPQLSPFLHPHGQQVPYYLENEPSAYAVRDTGPPAFYRSNSDNRRQNGRERLSSSNEKGNMIMESAKETRYCAVCNDYASGYHYGVWSCEGCKAFFKRSIQGHNDYMCPATNQCTIDKNRRKSCQACRLRKCYEVGMMKGGIRKDRRGGRMLKHKRQRDDLEGRNEMGASGDMRAANLWPSPLVIKHTKKNSPALSLTADQMVSALLDAEPPMIYSEYDPSRPFSEASMMGLLTNLADRELVHMINWAKRVPGFGDLNLHDQVHLLECAWLEILMIGLVWRSMEHPGKLLFAPNLLLDRNQGKCVEGMVEIFDMLLATSSRFRMMNLQGEEFVCLKSIILLNSGVYTFLSSTLKSLEEKDHIHRVLDKITDTLIHLMAKAGLTLQQQHRRLAQLLLILSHIRHMSNKGMEHLYNMKCKNVVPLYDLLLEMLDAHRLHAPASRMGVPPEEPSQTQLATTSSTSAHSLQTYYIPPEAEGFPNTI</sequence>
<reference key="1">
    <citation type="journal article" date="1987" name="Mol. Endocrinol.">
        <title>Structural organization and expression of the mouse estrogen receptor.</title>
        <authorList>
            <person name="White R."/>
            <person name="Lees J.A."/>
            <person name="Needham M."/>
            <person name="Ham J."/>
            <person name="Parker M."/>
        </authorList>
    </citation>
    <scope>NUCLEOTIDE SEQUENCE [MRNA]</scope>
    <source>
        <tissue>Uterus</tissue>
    </source>
</reference>
<reference key="2">
    <citation type="journal article" date="2005" name="Science">
        <title>The transcriptional landscape of the mammalian genome.</title>
        <authorList>
            <person name="Carninci P."/>
            <person name="Kasukawa T."/>
            <person name="Katayama S."/>
            <person name="Gough J."/>
            <person name="Frith M.C."/>
            <person name="Maeda N."/>
            <person name="Oyama R."/>
            <person name="Ravasi T."/>
            <person name="Lenhard B."/>
            <person name="Wells C."/>
            <person name="Kodzius R."/>
            <person name="Shimokawa K."/>
            <person name="Bajic V.B."/>
            <person name="Brenner S.E."/>
            <person name="Batalov S."/>
            <person name="Forrest A.R."/>
            <person name="Zavolan M."/>
            <person name="Davis M.J."/>
            <person name="Wilming L.G."/>
            <person name="Aidinis V."/>
            <person name="Allen J.E."/>
            <person name="Ambesi-Impiombato A."/>
            <person name="Apweiler R."/>
            <person name="Aturaliya R.N."/>
            <person name="Bailey T.L."/>
            <person name="Bansal M."/>
            <person name="Baxter L."/>
            <person name="Beisel K.W."/>
            <person name="Bersano T."/>
            <person name="Bono H."/>
            <person name="Chalk A.M."/>
            <person name="Chiu K.P."/>
            <person name="Choudhary V."/>
            <person name="Christoffels A."/>
            <person name="Clutterbuck D.R."/>
            <person name="Crowe M.L."/>
            <person name="Dalla E."/>
            <person name="Dalrymple B.P."/>
            <person name="de Bono B."/>
            <person name="Della Gatta G."/>
            <person name="di Bernardo D."/>
            <person name="Down T."/>
            <person name="Engstrom P."/>
            <person name="Fagiolini M."/>
            <person name="Faulkner G."/>
            <person name="Fletcher C.F."/>
            <person name="Fukushima T."/>
            <person name="Furuno M."/>
            <person name="Futaki S."/>
            <person name="Gariboldi M."/>
            <person name="Georgii-Hemming P."/>
            <person name="Gingeras T.R."/>
            <person name="Gojobori T."/>
            <person name="Green R.E."/>
            <person name="Gustincich S."/>
            <person name="Harbers M."/>
            <person name="Hayashi Y."/>
            <person name="Hensch T.K."/>
            <person name="Hirokawa N."/>
            <person name="Hill D."/>
            <person name="Huminiecki L."/>
            <person name="Iacono M."/>
            <person name="Ikeo K."/>
            <person name="Iwama A."/>
            <person name="Ishikawa T."/>
            <person name="Jakt M."/>
            <person name="Kanapin A."/>
            <person name="Katoh M."/>
            <person name="Kawasawa Y."/>
            <person name="Kelso J."/>
            <person name="Kitamura H."/>
            <person name="Kitano H."/>
            <person name="Kollias G."/>
            <person name="Krishnan S.P."/>
            <person name="Kruger A."/>
            <person name="Kummerfeld S.K."/>
            <person name="Kurochkin I.V."/>
            <person name="Lareau L.F."/>
            <person name="Lazarevic D."/>
            <person name="Lipovich L."/>
            <person name="Liu J."/>
            <person name="Liuni S."/>
            <person name="McWilliam S."/>
            <person name="Madan Babu M."/>
            <person name="Madera M."/>
            <person name="Marchionni L."/>
            <person name="Matsuda H."/>
            <person name="Matsuzawa S."/>
            <person name="Miki H."/>
            <person name="Mignone F."/>
            <person name="Miyake S."/>
            <person name="Morris K."/>
            <person name="Mottagui-Tabar S."/>
            <person name="Mulder N."/>
            <person name="Nakano N."/>
            <person name="Nakauchi H."/>
            <person name="Ng P."/>
            <person name="Nilsson R."/>
            <person name="Nishiguchi S."/>
            <person name="Nishikawa S."/>
            <person name="Nori F."/>
            <person name="Ohara O."/>
            <person name="Okazaki Y."/>
            <person name="Orlando V."/>
            <person name="Pang K.C."/>
            <person name="Pavan W.J."/>
            <person name="Pavesi G."/>
            <person name="Pesole G."/>
            <person name="Petrovsky N."/>
            <person name="Piazza S."/>
            <person name="Reed J."/>
            <person name="Reid J.F."/>
            <person name="Ring B.Z."/>
            <person name="Ringwald M."/>
            <person name="Rost B."/>
            <person name="Ruan Y."/>
            <person name="Salzberg S.L."/>
            <person name="Sandelin A."/>
            <person name="Schneider C."/>
            <person name="Schoenbach C."/>
            <person name="Sekiguchi K."/>
            <person name="Semple C.A."/>
            <person name="Seno S."/>
            <person name="Sessa L."/>
            <person name="Sheng Y."/>
            <person name="Shibata Y."/>
            <person name="Shimada H."/>
            <person name="Shimada K."/>
            <person name="Silva D."/>
            <person name="Sinclair B."/>
            <person name="Sperling S."/>
            <person name="Stupka E."/>
            <person name="Sugiura K."/>
            <person name="Sultana R."/>
            <person name="Takenaka Y."/>
            <person name="Taki K."/>
            <person name="Tammoja K."/>
            <person name="Tan S.L."/>
            <person name="Tang S."/>
            <person name="Taylor M.S."/>
            <person name="Tegner J."/>
            <person name="Teichmann S.A."/>
            <person name="Ueda H.R."/>
            <person name="van Nimwegen E."/>
            <person name="Verardo R."/>
            <person name="Wei C.L."/>
            <person name="Yagi K."/>
            <person name="Yamanishi H."/>
            <person name="Zabarovsky E."/>
            <person name="Zhu S."/>
            <person name="Zimmer A."/>
            <person name="Hide W."/>
            <person name="Bult C."/>
            <person name="Grimmond S.M."/>
            <person name="Teasdale R.D."/>
            <person name="Liu E.T."/>
            <person name="Brusic V."/>
            <person name="Quackenbush J."/>
            <person name="Wahlestedt C."/>
            <person name="Mattick J.S."/>
            <person name="Hume D.A."/>
            <person name="Kai C."/>
            <person name="Sasaki D."/>
            <person name="Tomaru Y."/>
            <person name="Fukuda S."/>
            <person name="Kanamori-Katayama M."/>
            <person name="Suzuki M."/>
            <person name="Aoki J."/>
            <person name="Arakawa T."/>
            <person name="Iida J."/>
            <person name="Imamura K."/>
            <person name="Itoh M."/>
            <person name="Kato T."/>
            <person name="Kawaji H."/>
            <person name="Kawagashira N."/>
            <person name="Kawashima T."/>
            <person name="Kojima M."/>
            <person name="Kondo S."/>
            <person name="Konno H."/>
            <person name="Nakano K."/>
            <person name="Ninomiya N."/>
            <person name="Nishio T."/>
            <person name="Okada M."/>
            <person name="Plessy C."/>
            <person name="Shibata K."/>
            <person name="Shiraki T."/>
            <person name="Suzuki S."/>
            <person name="Tagami M."/>
            <person name="Waki K."/>
            <person name="Watahiki A."/>
            <person name="Okamura-Oho Y."/>
            <person name="Suzuki H."/>
            <person name="Kawai J."/>
            <person name="Hayashizaki Y."/>
        </authorList>
    </citation>
    <scope>NUCLEOTIDE SEQUENCE [LARGE SCALE MRNA]</scope>
    <source>
        <strain>C57BL/6J</strain>
        <tissue>Bone</tissue>
        <tissue>Thymus</tissue>
    </source>
</reference>
<reference key="3">
    <citation type="journal article" date="2000" name="FEBS Lett.">
        <title>Tissue-specific expression of multiple mRNA variants of the mouse estrogen receptor alpha gene.</title>
        <authorList>
            <person name="Kos M."/>
            <person name="O'Brien S."/>
            <person name="Flouriot G."/>
            <person name="Gannon F."/>
        </authorList>
    </citation>
    <scope>NUCLEOTIDE SEQUENCE [GENOMIC DNA] OF 1-22</scope>
    <source>
        <strain>C57BL/6J</strain>
        <tissue>Liver</tissue>
    </source>
</reference>
<reference key="4">
    <citation type="submission" date="1999-01" db="EMBL/GenBank/DDBJ databases">
        <title>Screening for candidate genes of mouse autoimmune diseases.</title>
        <authorList>
            <person name="Ma R.Z."/>
            <person name="Teuscher C."/>
        </authorList>
    </citation>
    <scope>NUCLEOTIDE SEQUENCE [MRNA] OF 269-599</scope>
    <scope>VARIANT GLN-591</scope>
    <source>
        <strain>B10.S/J</strain>
        <strain>SJL/J</strain>
        <tissue>Spleen</tissue>
    </source>
</reference>
<reference key="5">
    <citation type="journal article" date="1995" name="EMBO J.">
        <title>Nuclear factor RIP140 modulates transcriptional activation by the estrogen receptor.</title>
        <authorList>
            <person name="Cavailles V."/>
            <person name="Dauvois S."/>
            <person name="L'Horset F."/>
            <person name="Lopez G."/>
            <person name="Hoare S."/>
            <person name="Kushner P.J."/>
            <person name="Parker M.G."/>
        </authorList>
    </citation>
    <scope>INTERACTION WITH NRIP1</scope>
</reference>
<reference key="6">
    <citation type="journal article" date="1998" name="Mol. Cell. Biol.">
        <title>POU transcription factors Brn-3a and Brn-3b interact with the estrogen receptor and differentially regulate transcriptional activity via an estrogen response element.</title>
        <authorList>
            <person name="Budhram-Mahadeo V."/>
            <person name="Parker M."/>
            <person name="Latchman D.S."/>
        </authorList>
    </citation>
    <scope>INTERACTION WITH POU4F2</scope>
</reference>
<reference key="7">
    <citation type="journal article" date="1999" name="Mol. Cell. Biol.">
        <title>Molecular determinants of the estrogen receptor-coactivator interface.</title>
        <authorList>
            <person name="Mak H.Y."/>
            <person name="Hoare S."/>
            <person name="Henttu P.M."/>
            <person name="Parker M.G."/>
        </authorList>
    </citation>
    <scope>FUNCTION</scope>
    <scope>INTERACTION WITH NCOA1</scope>
    <scope>MUTAGENESIS OF ILE-362; LYS-366; LEU-376; VAL-380 AND LEU-543</scope>
</reference>
<reference key="8">
    <citation type="journal article" date="2000" name="J. Biol. Chem.">
        <title>Mutations in the estrogen receptor ligand binding domain discriminate between hormone-dependent transactivation and transrepression.</title>
        <authorList>
            <person name="Valentine J.E."/>
            <person name="Kalkhoven E."/>
            <person name="White R."/>
            <person name="Hoare S."/>
            <person name="Parker M.G."/>
        </authorList>
    </citation>
    <scope>FUNCTION</scope>
    <scope>INTERACTION WITH NCOA1</scope>
    <scope>MUTAGENESIS OF PHE-371; LEU-508; ALA-509; LEU-512; LEU-515; GLY-525; ASP-542; 543-LEU-LEU-544; GLU-546; 547-MET-LEU-548 AND ASP-549</scope>
</reference>
<reference key="9">
    <citation type="journal article" date="2007" name="Mol. Endocrinol.">
        <title>Constitutive coactivator of peroxisome proliferator-activated receptor (PPARgamma), a novel coactivator of PPARgamma that promotes adipogenesis.</title>
        <authorList>
            <person name="Li D."/>
            <person name="Kang Q."/>
            <person name="Wang D.-M."/>
        </authorList>
    </citation>
    <scope>INTERACTION WITH FAM120B</scope>
</reference>
<reference key="10">
    <citation type="journal article" date="1997" name="J. Biol. Chem.">
        <title>A subpopulation of estrogen receptors are modified by O-linked N-acetylglucosamine.</title>
        <authorList>
            <person name="Jiang M.S."/>
            <person name="Hart G.W."/>
        </authorList>
    </citation>
    <scope>GLYCOSYLATION AT THR-575</scope>
</reference>
<reference key="11">
    <citation type="journal article" date="2000" name="J. Steroid Biochem. Mol. Biol.">
        <title>Glycosylation of the murine estrogen receptor-alpha.</title>
        <authorList>
            <person name="Cheng X."/>
            <person name="Hart G.W."/>
        </authorList>
    </citation>
    <scope>GLYCOSYLATION AT SER-10; THR-50 AND THR-575</scope>
</reference>
<reference key="12">
    <citation type="journal article" date="1997" name="Nature">
        <title>The transcriptional co-activator p/CIP binds CBP and mediates nuclear-receptor function.</title>
        <authorList>
            <person name="Torchia J."/>
            <person name="Rose D.W."/>
            <person name="Inostroza J."/>
            <person name="Kamei Y."/>
            <person name="Westin S."/>
            <person name="Glass C.K."/>
            <person name="Rosenfeld M.G."/>
        </authorList>
    </citation>
    <scope>INTERACTION WITH NCOA3</scope>
</reference>
<reference key="13">
    <citation type="journal article" date="2000" name="J. Biol. Chem.">
        <title>Isolation and characterization of peroxisome proliferator-activated receptor (PPAR) interacting protein (PRIP) as a coactivator for PPAR.</title>
        <authorList>
            <person name="Zhu Y.-J."/>
            <person name="Kan L."/>
            <person name="Qi C."/>
            <person name="Kanwar Y.S."/>
            <person name="Yeldandi A.V."/>
            <person name="Rao M.S."/>
            <person name="Reddy J.K."/>
        </authorList>
    </citation>
    <scope>INTERACTION WITH NCOA6</scope>
</reference>
<reference key="14">
    <citation type="journal article" date="2002" name="J. Biol. Chem.">
        <title>Molecular cloning and characterization of CAPER, a novel coactivator of activating protein-1 and estrogen receptors.</title>
        <authorList>
            <person name="Jung D.-J."/>
            <person name="Na S.-Y."/>
            <person name="Na D.S."/>
            <person name="Lee J.W."/>
        </authorList>
    </citation>
    <scope>INTERACTION WITH RBM39</scope>
</reference>
<reference key="15">
    <citation type="journal article" date="2004" name="J. Biol. Chem.">
        <title>Transcriptional regulation by the repressor of estrogen receptor activity via recruitment of histone deacetylases.</title>
        <authorList>
            <person name="Kurtev V."/>
            <person name="Margueron R."/>
            <person name="Kroboth K."/>
            <person name="Ogris E."/>
            <person name="Cavailles V."/>
            <person name="Seiser C."/>
        </authorList>
    </citation>
    <scope>INTERACTION WITH PHB2</scope>
</reference>
<reference key="16">
    <citation type="journal article" date="2005" name="Mol. Cell. Biol.">
        <title>GAC63, a GRIP1-dependent nuclear receptor coactivator.</title>
        <authorList>
            <person name="Chen Y.-H."/>
            <person name="Kim J.H."/>
            <person name="Stallcup M.R."/>
        </authorList>
    </citation>
    <scope>INTERACTION WITH SLC30A9</scope>
</reference>
<reference key="17">
    <citation type="journal article" date="2009" name="Cell">
        <title>Somatic sex reprogramming of adult ovaries to testes by FOXL2 ablation.</title>
        <authorList>
            <person name="Uhlenhaut N.H."/>
            <person name="Jakob S."/>
            <person name="Anlag K."/>
            <person name="Eisenberger T."/>
            <person name="Sekido R."/>
            <person name="Kress J."/>
            <person name="Treier A.C."/>
            <person name="Klugmann C."/>
            <person name="Klasen C."/>
            <person name="Holter N.I."/>
            <person name="Riethmacher D."/>
            <person name="Schutz G."/>
            <person name="Cooney A.J."/>
            <person name="Lovell-Badge R."/>
            <person name="Treier M."/>
        </authorList>
    </citation>
    <scope>INTERACTION WITH FOXL2</scope>
</reference>
<reference key="18">
    <citation type="journal article" date="2012" name="Mol. Biol. Cell">
        <title>DHHC-7 and -21 are palmitoylacyltransferases for sex steroid receptors.</title>
        <authorList>
            <person name="Pedram A."/>
            <person name="Razandi M."/>
            <person name="Deschenes R.J."/>
            <person name="Levin E.R."/>
        </authorList>
    </citation>
    <scope>PALMITOYLATION AT CYS-451</scope>
    <scope>MUTAGENESIS OF CYS-451</scope>
</reference>